<evidence type="ECO:0000250" key="1"/>
<evidence type="ECO:0000255" key="2"/>
<evidence type="ECO:0000269" key="3">
    <source>
    </source>
</evidence>
<evidence type="ECO:0000269" key="4">
    <source>
    </source>
</evidence>
<evidence type="ECO:0000305" key="5"/>
<proteinExistence type="evidence at transcript level"/>
<dbReference type="EMBL" id="AE017180">
    <property type="protein sequence ID" value="AAR36109.1"/>
    <property type="molecule type" value="Genomic_DNA"/>
</dbReference>
<dbReference type="RefSeq" id="NP_953782.1">
    <property type="nucleotide sequence ID" value="NC_002939.5"/>
</dbReference>
<dbReference type="RefSeq" id="WP_010943369.1">
    <property type="nucleotide sequence ID" value="NC_002939.5"/>
</dbReference>
<dbReference type="STRING" id="243231.GSU2737"/>
<dbReference type="TCDB" id="5.B.8.1.1">
    <property type="family name" value="the trans-outer membrane electron transfer porin/cytochrome complex (et-pcc) family"/>
</dbReference>
<dbReference type="EnsemblBacteria" id="AAR36109">
    <property type="protein sequence ID" value="AAR36109"/>
    <property type="gene ID" value="GSU2737"/>
</dbReference>
<dbReference type="KEGG" id="gsu:GSU2737"/>
<dbReference type="PATRIC" id="fig|243231.5.peg.2761"/>
<dbReference type="eggNOG" id="COG3005">
    <property type="taxonomic scope" value="Bacteria"/>
</dbReference>
<dbReference type="HOGENOM" id="CLU_355545_0_0_7"/>
<dbReference type="InParanoid" id="Q749K5"/>
<dbReference type="OrthoDB" id="5477228at2"/>
<dbReference type="Proteomes" id="UP000000577">
    <property type="component" value="Chromosome"/>
</dbReference>
<dbReference type="GO" id="GO:0009279">
    <property type="term" value="C:cell outer membrane"/>
    <property type="evidence" value="ECO:0007669"/>
    <property type="project" value="UniProtKB-SubCell"/>
</dbReference>
<dbReference type="GO" id="GO:0046872">
    <property type="term" value="F:metal ion binding"/>
    <property type="evidence" value="ECO:0007669"/>
    <property type="project" value="UniProtKB-KW"/>
</dbReference>
<dbReference type="GO" id="GO:0016491">
    <property type="term" value="F:oxidoreductase activity"/>
    <property type="evidence" value="ECO:0000318"/>
    <property type="project" value="GO_Central"/>
</dbReference>
<dbReference type="FunFam" id="1.10.1130.10:FF:000006">
    <property type="entry name" value="C-type polyheme cytochrome OmcB"/>
    <property type="match status" value="1"/>
</dbReference>
<dbReference type="Gene3D" id="1.10.1130.10">
    <property type="entry name" value="Flavocytochrome C3, Chain A"/>
    <property type="match status" value="2"/>
</dbReference>
<dbReference type="InterPro" id="IPR036280">
    <property type="entry name" value="Multihaem_cyt_sf"/>
</dbReference>
<dbReference type="PANTHER" id="PTHR39425:SF1">
    <property type="entry name" value="CYTOCHROME C7-LIKE DOMAIN-CONTAINING PROTEIN"/>
    <property type="match status" value="1"/>
</dbReference>
<dbReference type="PANTHER" id="PTHR39425">
    <property type="entry name" value="LIPOPROTEIN CYTOCHROME C"/>
    <property type="match status" value="1"/>
</dbReference>
<dbReference type="SUPFAM" id="SSF48695">
    <property type="entry name" value="Multiheme cytochromes"/>
    <property type="match status" value="2"/>
</dbReference>
<dbReference type="PROSITE" id="PS51008">
    <property type="entry name" value="MULTIHEME_CYTC"/>
    <property type="match status" value="1"/>
</dbReference>
<dbReference type="PROSITE" id="PS51257">
    <property type="entry name" value="PROKAR_LIPOPROTEIN"/>
    <property type="match status" value="1"/>
</dbReference>
<keyword id="KW-0998">Cell outer membrane</keyword>
<keyword id="KW-0249">Electron transport</keyword>
<keyword id="KW-0349">Heme</keyword>
<keyword id="KW-0408">Iron</keyword>
<keyword id="KW-0449">Lipoprotein</keyword>
<keyword id="KW-0472">Membrane</keyword>
<keyword id="KW-0479">Metal-binding</keyword>
<keyword id="KW-0564">Palmitate</keyword>
<keyword id="KW-1185">Reference proteome</keyword>
<keyword id="KW-0732">Signal</keyword>
<keyword id="KW-0813">Transport</keyword>
<accession>Q749K5</accession>
<gene>
    <name type="primary">omcB</name>
    <name type="ordered locus">GSU2737</name>
</gene>
<organism>
    <name type="scientific">Geobacter sulfurreducens (strain ATCC 51573 / DSM 12127 / PCA)</name>
    <dbReference type="NCBI Taxonomy" id="243231"/>
    <lineage>
        <taxon>Bacteria</taxon>
        <taxon>Pseudomonadati</taxon>
        <taxon>Thermodesulfobacteriota</taxon>
        <taxon>Desulfuromonadia</taxon>
        <taxon>Geobacterales</taxon>
        <taxon>Geobacteraceae</taxon>
        <taxon>Geobacter</taxon>
    </lineage>
</organism>
<feature type="signal peptide" evidence="2">
    <location>
        <begin position="1"/>
        <end position="23"/>
    </location>
</feature>
<feature type="chain" id="PRO_0000429039" description="C-type polyheme cytochrome OmcB">
    <location>
        <begin position="24"/>
        <end position="744"/>
    </location>
</feature>
<feature type="binding site" description="covalent" evidence="2">
    <location>
        <position position="48"/>
    </location>
    <ligand>
        <name>heme c</name>
        <dbReference type="ChEBI" id="CHEBI:61717"/>
        <label>1</label>
    </ligand>
</feature>
<feature type="binding site" description="covalent" evidence="2">
    <location>
        <position position="51"/>
    </location>
    <ligand>
        <name>heme c</name>
        <dbReference type="ChEBI" id="CHEBI:61717"/>
        <label>1</label>
    </ligand>
</feature>
<feature type="binding site" description="axial binding residue" evidence="2">
    <location>
        <position position="52"/>
    </location>
    <ligand>
        <name>heme c</name>
        <dbReference type="ChEBI" id="CHEBI:61717"/>
        <label>1</label>
    </ligand>
    <ligandPart>
        <name>Fe</name>
        <dbReference type="ChEBI" id="CHEBI:18248"/>
    </ligandPart>
</feature>
<feature type="binding site" description="covalent" evidence="2">
    <location>
        <position position="81"/>
    </location>
    <ligand>
        <name>heme c</name>
        <dbReference type="ChEBI" id="CHEBI:61717"/>
        <label>2</label>
    </ligand>
</feature>
<feature type="binding site" description="covalent" evidence="2">
    <location>
        <position position="84"/>
    </location>
    <ligand>
        <name>heme c</name>
        <dbReference type="ChEBI" id="CHEBI:61717"/>
        <label>2</label>
    </ligand>
</feature>
<feature type="binding site" description="axial binding residue" evidence="2">
    <location>
        <position position="85"/>
    </location>
    <ligand>
        <name>heme c</name>
        <dbReference type="ChEBI" id="CHEBI:61717"/>
        <label>2</label>
    </ligand>
    <ligandPart>
        <name>Fe</name>
        <dbReference type="ChEBI" id="CHEBI:18248"/>
    </ligandPart>
</feature>
<feature type="binding site" description="covalent" evidence="2">
    <location>
        <position position="107"/>
    </location>
    <ligand>
        <name>heme c</name>
        <dbReference type="ChEBI" id="CHEBI:61717"/>
        <label>3</label>
    </ligand>
</feature>
<feature type="binding site" description="covalent" evidence="2">
    <location>
        <position position="110"/>
    </location>
    <ligand>
        <name>heme c</name>
        <dbReference type="ChEBI" id="CHEBI:61717"/>
        <label>3</label>
    </ligand>
</feature>
<feature type="binding site" description="axial binding residue" evidence="2">
    <location>
        <position position="111"/>
    </location>
    <ligand>
        <name>heme c</name>
        <dbReference type="ChEBI" id="CHEBI:61717"/>
        <label>3</label>
    </ligand>
    <ligandPart>
        <name>Fe</name>
        <dbReference type="ChEBI" id="CHEBI:18248"/>
    </ligandPart>
</feature>
<feature type="binding site" description="covalent" evidence="2">
    <location>
        <position position="141"/>
    </location>
    <ligand>
        <name>heme c</name>
        <dbReference type="ChEBI" id="CHEBI:61717"/>
        <label>4</label>
    </ligand>
</feature>
<feature type="binding site" description="covalent" evidence="2">
    <location>
        <position position="144"/>
    </location>
    <ligand>
        <name>heme c</name>
        <dbReference type="ChEBI" id="CHEBI:61717"/>
        <label>4</label>
    </ligand>
</feature>
<feature type="binding site" description="axial binding residue" evidence="2">
    <location>
        <position position="145"/>
    </location>
    <ligand>
        <name>heme c</name>
        <dbReference type="ChEBI" id="CHEBI:61717"/>
        <label>4</label>
    </ligand>
    <ligandPart>
        <name>Fe</name>
        <dbReference type="ChEBI" id="CHEBI:18248"/>
    </ligandPart>
</feature>
<feature type="binding site" description="covalent" evidence="2">
    <location>
        <position position="185"/>
    </location>
    <ligand>
        <name>heme c</name>
        <dbReference type="ChEBI" id="CHEBI:61717"/>
        <label>5</label>
    </ligand>
</feature>
<feature type="binding site" description="covalent" evidence="2">
    <location>
        <position position="188"/>
    </location>
    <ligand>
        <name>heme c</name>
        <dbReference type="ChEBI" id="CHEBI:61717"/>
        <label>5</label>
    </ligand>
</feature>
<feature type="binding site" description="axial binding residue" evidence="2">
    <location>
        <position position="189"/>
    </location>
    <ligand>
        <name>heme c</name>
        <dbReference type="ChEBI" id="CHEBI:61717"/>
        <label>5</label>
    </ligand>
    <ligandPart>
        <name>Fe</name>
        <dbReference type="ChEBI" id="CHEBI:18248"/>
    </ligandPart>
</feature>
<feature type="binding site" description="covalent" evidence="2">
    <location>
        <position position="225"/>
    </location>
    <ligand>
        <name>heme c</name>
        <dbReference type="ChEBI" id="CHEBI:61717"/>
        <label>6</label>
    </ligand>
</feature>
<feature type="binding site" description="covalent" evidence="2">
    <location>
        <position position="228"/>
    </location>
    <ligand>
        <name>heme c</name>
        <dbReference type="ChEBI" id="CHEBI:61717"/>
        <label>6</label>
    </ligand>
</feature>
<feature type="binding site" description="axial binding residue" evidence="2">
    <location>
        <position position="229"/>
    </location>
    <ligand>
        <name>heme c</name>
        <dbReference type="ChEBI" id="CHEBI:61717"/>
        <label>6</label>
    </ligand>
    <ligandPart>
        <name>Fe</name>
        <dbReference type="ChEBI" id="CHEBI:18248"/>
    </ligandPart>
</feature>
<feature type="binding site" description="covalent" evidence="2">
    <location>
        <position position="303"/>
    </location>
    <ligand>
        <name>heme c</name>
        <dbReference type="ChEBI" id="CHEBI:61717"/>
        <label>7</label>
    </ligand>
</feature>
<feature type="binding site" description="covalent" evidence="2">
    <location>
        <position position="306"/>
    </location>
    <ligand>
        <name>heme c</name>
        <dbReference type="ChEBI" id="CHEBI:61717"/>
        <label>7</label>
    </ligand>
</feature>
<feature type="binding site" description="axial binding residue" evidence="2">
    <location>
        <position position="307"/>
    </location>
    <ligand>
        <name>heme c</name>
        <dbReference type="ChEBI" id="CHEBI:61717"/>
        <label>7</label>
    </ligand>
    <ligandPart>
        <name>Fe</name>
        <dbReference type="ChEBI" id="CHEBI:18248"/>
    </ligandPart>
</feature>
<feature type="binding site" description="covalent" evidence="2">
    <location>
        <position position="382"/>
    </location>
    <ligand>
        <name>heme c</name>
        <dbReference type="ChEBI" id="CHEBI:61717"/>
        <label>8</label>
    </ligand>
</feature>
<feature type="binding site" description="covalent" evidence="2">
    <location>
        <position position="385"/>
    </location>
    <ligand>
        <name>heme c</name>
        <dbReference type="ChEBI" id="CHEBI:61717"/>
        <label>8</label>
    </ligand>
</feature>
<feature type="binding site" description="axial binding residue" evidence="2">
    <location>
        <position position="386"/>
    </location>
    <ligand>
        <name>heme c</name>
        <dbReference type="ChEBI" id="CHEBI:61717"/>
        <label>8</label>
    </ligand>
    <ligandPart>
        <name>Fe</name>
        <dbReference type="ChEBI" id="CHEBI:18248"/>
    </ligandPart>
</feature>
<feature type="binding site" description="covalent" evidence="2">
    <location>
        <position position="430"/>
    </location>
    <ligand>
        <name>heme c</name>
        <dbReference type="ChEBI" id="CHEBI:61717"/>
        <label>9</label>
    </ligand>
</feature>
<feature type="binding site" description="covalent" evidence="2">
    <location>
        <position position="433"/>
    </location>
    <ligand>
        <name>heme c</name>
        <dbReference type="ChEBI" id="CHEBI:61717"/>
        <label>9</label>
    </ligand>
</feature>
<feature type="binding site" description="axial binding residue" evidence="2">
    <location>
        <position position="434"/>
    </location>
    <ligand>
        <name>heme c</name>
        <dbReference type="ChEBI" id="CHEBI:61717"/>
        <label>9</label>
    </ligand>
    <ligandPart>
        <name>Fe</name>
        <dbReference type="ChEBI" id="CHEBI:18248"/>
    </ligandPart>
</feature>
<feature type="binding site" description="covalent" evidence="2">
    <location>
        <position position="480"/>
    </location>
    <ligand>
        <name>heme c</name>
        <dbReference type="ChEBI" id="CHEBI:61717"/>
        <label>10</label>
    </ligand>
</feature>
<feature type="binding site" description="covalent" evidence="2">
    <location>
        <position position="483"/>
    </location>
    <ligand>
        <name>heme c</name>
        <dbReference type="ChEBI" id="CHEBI:61717"/>
        <label>10</label>
    </ligand>
</feature>
<feature type="binding site" description="axial binding residue" evidence="2">
    <location>
        <position position="484"/>
    </location>
    <ligand>
        <name>heme c</name>
        <dbReference type="ChEBI" id="CHEBI:61717"/>
        <label>10</label>
    </ligand>
    <ligandPart>
        <name>Fe</name>
        <dbReference type="ChEBI" id="CHEBI:18248"/>
    </ligandPart>
</feature>
<feature type="binding site" description="covalent" evidence="2">
    <location>
        <position position="555"/>
    </location>
    <ligand>
        <name>heme c</name>
        <dbReference type="ChEBI" id="CHEBI:61717"/>
        <label>11</label>
    </ligand>
</feature>
<feature type="binding site" description="covalent" evidence="2">
    <location>
        <position position="558"/>
    </location>
    <ligand>
        <name>heme c</name>
        <dbReference type="ChEBI" id="CHEBI:61717"/>
        <label>11</label>
    </ligand>
</feature>
<feature type="binding site" description="axial binding residue" evidence="2">
    <location>
        <position position="559"/>
    </location>
    <ligand>
        <name>heme c</name>
        <dbReference type="ChEBI" id="CHEBI:61717"/>
        <label>11</label>
    </ligand>
    <ligandPart>
        <name>Fe</name>
        <dbReference type="ChEBI" id="CHEBI:18248"/>
    </ligandPart>
</feature>
<feature type="binding site" description="covalent" evidence="2">
    <location>
        <position position="587"/>
    </location>
    <ligand>
        <name>heme c</name>
        <dbReference type="ChEBI" id="CHEBI:61717"/>
        <label>12</label>
    </ligand>
</feature>
<feature type="binding site" description="covalent" evidence="2">
    <location>
        <position position="590"/>
    </location>
    <ligand>
        <name>heme c</name>
        <dbReference type="ChEBI" id="CHEBI:61717"/>
        <label>12</label>
    </ligand>
</feature>
<feature type="binding site" description="axial binding residue" evidence="2">
    <location>
        <position position="591"/>
    </location>
    <ligand>
        <name>heme c</name>
        <dbReference type="ChEBI" id="CHEBI:61717"/>
        <label>12</label>
    </ligand>
    <ligandPart>
        <name>Fe</name>
        <dbReference type="ChEBI" id="CHEBI:18248"/>
    </ligandPart>
</feature>
<feature type="lipid moiety-binding region" description="N-palmitoyl cysteine" evidence="1">
    <location>
        <position position="24"/>
    </location>
</feature>
<feature type="lipid moiety-binding region" description="S-diacylglycerol cysteine" evidence="2">
    <location>
        <position position="24"/>
    </location>
</feature>
<name>CYCB_GEOSL</name>
<protein>
    <recommendedName>
        <fullName>C-type polyheme cytochrome OmcB</fullName>
    </recommendedName>
    <alternativeName>
        <fullName>Outer membrane c-type cytochrome B</fullName>
    </alternativeName>
</protein>
<comment type="function">
    <text evidence="3">Involved in anaerobic respiration with Fe(3+) as terminal electron acceptor. Acts as an electron-transport mediator in the dissimilatory reduction of Fe(3+).</text>
</comment>
<comment type="subcellular location">
    <subcellularLocation>
        <location evidence="1">Cell outer membrane</location>
        <topology evidence="5">Lipid-anchor</topology>
    </subcellularLocation>
</comment>
<comment type="induction">
    <text evidence="4">Up-regulated by Fe(3+).</text>
</comment>
<comment type="PTM">
    <text evidence="5">Binds 12 heme c groups per subunit.</text>
</comment>
<reference key="1">
    <citation type="journal article" date="2003" name="Science">
        <title>Genome of Geobacter sulfurreducens: metal reduction in subsurface environments.</title>
        <authorList>
            <person name="Methe B.A."/>
            <person name="Nelson K.E."/>
            <person name="Eisen J.A."/>
            <person name="Paulsen I.T."/>
            <person name="Nelson W.C."/>
            <person name="Heidelberg J.F."/>
            <person name="Wu D."/>
            <person name="Wu M."/>
            <person name="Ward N.L."/>
            <person name="Beanan M.J."/>
            <person name="Dodson R.J."/>
            <person name="Madupu R."/>
            <person name="Brinkac L.M."/>
            <person name="Daugherty S.C."/>
            <person name="DeBoy R.T."/>
            <person name="Durkin A.S."/>
            <person name="Gwinn M.L."/>
            <person name="Kolonay J.F."/>
            <person name="Sullivan S.A."/>
            <person name="Haft D.H."/>
            <person name="Selengut J."/>
            <person name="Davidsen T.M."/>
            <person name="Zafar N."/>
            <person name="White O."/>
            <person name="Tran B."/>
            <person name="Romero C."/>
            <person name="Forberger H.A."/>
            <person name="Weidman J.F."/>
            <person name="Khouri H.M."/>
            <person name="Feldblyum T.V."/>
            <person name="Utterback T.R."/>
            <person name="Van Aken S.E."/>
            <person name="Lovley D.R."/>
            <person name="Fraser C.M."/>
        </authorList>
    </citation>
    <scope>NUCLEOTIDE SEQUENCE [LARGE SCALE GENOMIC DNA]</scope>
    <source>
        <strain>ATCC 51573 / DSM 12127 / PCA</strain>
    </source>
</reference>
<reference key="2">
    <citation type="journal article" date="2003" name="J. Bacteriol.">
        <title>OmcB, a c-type polyheme cytochrome, involved in Fe(III) reduction in Geobacter sulfurreducens.</title>
        <authorList>
            <person name="Leang C."/>
            <person name="Coppi M.V."/>
            <person name="Lovley D.R."/>
        </authorList>
    </citation>
    <scope>FUNCTION</scope>
    <source>
        <strain>DL-1 / KN400</strain>
    </source>
</reference>
<reference key="3">
    <citation type="journal article" date="2004" name="Appl. Environ. Microbiol.">
        <title>Direct correlation between rates of anaerobic respiration and levels of mRNA for key respiratory genes in Geobacter sulfurreducens.</title>
        <authorList>
            <person name="Chin K.J."/>
            <person name="Esteve-Nunez A."/>
            <person name="Leang C."/>
            <person name="Lovley D.R."/>
        </authorList>
    </citation>
    <scope>INDUCTION</scope>
    <source>
        <strain>ATCC 51573 / DSM 12127 / PCA</strain>
    </source>
</reference>
<sequence>MSRKVTKYSAVLAVSLFAAALAGCGSENKEGTVGTGPGGVATVGDSACVQCHSAVTEALTGESLIAQYQKSSPHNTAGLGCESCHGGGAQHNGVGPIPFAQPDASRCADCHDGTTAVATNSDTAFAESRHNIQTIRSGATCRRCHTHEGAVLSNIAGYTGDLATLEDTVNQNKVPLVSSYSQISCATCHEHGGGLRTIKATNGAAGPVVNWDPNNNRTVDQFDLCTSCHNMYSYNGSTLLTNGVPVNGVATGTVGHHETTWYRIIATTHFDNYSTGPQAGAGASGTNAKVEGYVLRRTGANPCFDCHGHEAKTNTRPGRDATIHTDWAKSAHAGGLLTAKYNAVGALTGAAAVNAAMNAYVDDTTAIAWTHYNWDASSRGSCQRCHTATGAANFMSNPAGYDPTGAGNSFSHLQGWSAANGSKQNELLYCWGCHTNAGTGELRNPGAITENYAGVNSTSTGTTGTAVTISYPDIAGSNVCMTCHLGREAGENIKAITDADGILGFVNSHYLAAGGQLFGKTGYEYATRSYAKPTFFAHDKIGTAAAPGTGTNGPCAGCHMTTPNSHSFLPVTKDGTGAVTAITSTACATCHAGAYALTPEALTAEEEEYVASLEALKAALAGKGILFFNAHPYFYRDTNANGIGDPGELVSSNAFTNWAGVYGLALWKDVMGAAFNANLLIHDPGGYAHNRFYVKRLIWDSIDFIYDGVLNNDVTAAIDAQVTATRLDSATATAAKAYLGTTRP</sequence>